<comment type="function">
    <text evidence="4">Participates in pre-mRNA U12-dependent splicing, performed by the minor spliceosome which removes U12-type introns. U12-type introns comprise less than 1% of all non-coding sequences.</text>
</comment>
<comment type="subunit">
    <text evidence="7">Component of the U11/U12 snRNPs that are part of the U12-type spliceosome.</text>
</comment>
<comment type="subcellular location">
    <subcellularLocation>
        <location evidence="7">Nucleus</location>
    </subcellularLocation>
</comment>
<comment type="developmental stage">
    <text evidence="4">Widely expressed until 24 hours post-fertilization (hpf), probably due to inheritance of maternal transcripts. Expression becomes restricted to lens, pharyngeal region, liver/pancreas anlage and intestine at 48-72 hpf. Strongly expressed in pancreas and intestine at 96-120 hpf.</text>
</comment>
<comment type="disruption phenotype">
    <text evidence="4">Larval lethal with complete lethality by 10 days post-fertilization. Development of multiple organs is affected. Head, eye, lens, pancreas and liver are smaller than normal, and the swim bladder fails to inflate. The intestinal epithelium also remains thin and unfolded. U12-type introns are retained in mRNAs, whereas excision of U2-type introns is not affected. Assembly of both U12- and U11-containing snRNP complexes may be abnormal. Gene expression levels are broadly impacted; effects are not limited to U12-type intron-containing genes.</text>
</comment>
<proteinExistence type="evidence at transcript level"/>
<sequence>MAETDEADVQTKKSKTLIIRHLPRELSRDEKEDLLKYFGASSVRVLSEKGPLKHMAFATFSSETSASKALNRLHQLRILGRTLVVEFAKDQDSASILKDPPVSDRTAAAVAEKEKKEKQQPSVPLMDTSIAPSLGLKFQTNPTLKYLYPPPSSGILTNITHTLLSVPKFYVQVLHLMNKMNLPSPFRPVTAPPPMFEMPSGPLPPPFPPENPPLPEHDESGSEEESEYESEDEEERERMIRLMGLVNQPCKRPLRTKTSSKRKKPKLKDLLFIPKPDSHGPSGPVLQPADVFEQPHALGQKKIEFHISSEVSAILEGPGQNQKLPFADATEDTPDMEVSAQETTEGFGKIYPSAQVPRQEEEQEEDEDIPSEFISRRELERGRLSRDEIKKLSVFKKYEPGEPTCRLYVKNVAKHVEEKDLKFIYGRYIDISSEEERNMFDIVLMKEGRMKGQAFIGLPSERSAQKALKETNGYVLKDKPLVVQFARSAKPKQESADPKKGGRKH</sequence>
<feature type="chain" id="PRO_0000442796" description="RNA-binding region-containing protein 3">
    <location>
        <begin position="1"/>
        <end position="505"/>
    </location>
</feature>
<feature type="domain" description="RRM 1" evidence="2">
    <location>
        <begin position="15"/>
        <end position="90"/>
    </location>
</feature>
<feature type="domain" description="RRM 2" evidence="2">
    <location>
        <begin position="405"/>
        <end position="488"/>
    </location>
</feature>
<feature type="region of interest" description="Disordered" evidence="3">
    <location>
        <begin position="96"/>
        <end position="123"/>
    </location>
</feature>
<feature type="region of interest" description="Disordered" evidence="3">
    <location>
        <begin position="193"/>
        <end position="236"/>
    </location>
</feature>
<feature type="region of interest" description="Disordered" evidence="3">
    <location>
        <begin position="354"/>
        <end position="374"/>
    </location>
</feature>
<feature type="region of interest" description="Disordered" evidence="3">
    <location>
        <begin position="486"/>
        <end position="505"/>
    </location>
</feature>
<feature type="compositionally biased region" description="Pro residues" evidence="3">
    <location>
        <begin position="193"/>
        <end position="214"/>
    </location>
</feature>
<feature type="compositionally biased region" description="Acidic residues" evidence="3">
    <location>
        <begin position="221"/>
        <end position="235"/>
    </location>
</feature>
<feature type="compositionally biased region" description="Acidic residues" evidence="3">
    <location>
        <begin position="361"/>
        <end position="370"/>
    </location>
</feature>
<feature type="compositionally biased region" description="Basic and acidic residues" evidence="3">
    <location>
        <begin position="491"/>
        <end position="505"/>
    </location>
</feature>
<feature type="sequence conflict" description="In Ref. 2; AAI14289." evidence="6" ref="2">
    <original>I</original>
    <variation>V</variation>
    <location>
        <position position="96"/>
    </location>
</feature>
<feature type="sequence conflict" description="In Ref. 2; AAI14289." evidence="6" ref="2">
    <original>E</original>
    <variation>G</variation>
    <location>
        <position position="231"/>
    </location>
</feature>
<feature type="sequence conflict" description="In Ref. 2; AAI14289." evidence="6" ref="2">
    <original>T</original>
    <variation>I</variation>
    <location>
        <position position="258"/>
    </location>
</feature>
<accession>F1Q8J0</accession>
<accession>Q29RB3</accession>
<evidence type="ECO:0000250" key="1">
    <source>
        <dbReference type="UniProtKB" id="Q96LT9"/>
    </source>
</evidence>
<evidence type="ECO:0000255" key="2">
    <source>
        <dbReference type="PROSITE-ProRule" id="PRU00176"/>
    </source>
</evidence>
<evidence type="ECO:0000256" key="3">
    <source>
        <dbReference type="SAM" id="MobiDB-lite"/>
    </source>
</evidence>
<evidence type="ECO:0000269" key="4">
    <source>
    </source>
</evidence>
<evidence type="ECO:0000303" key="5">
    <source>
    </source>
</evidence>
<evidence type="ECO:0000305" key="6"/>
<evidence type="ECO:0000305" key="7">
    <source>
    </source>
</evidence>
<evidence type="ECO:0000312" key="8">
    <source>
        <dbReference type="EMBL" id="AAI14289.1"/>
    </source>
</evidence>
<evidence type="ECO:0000312" key="9">
    <source>
        <dbReference type="Proteomes" id="UP000000437"/>
    </source>
</evidence>
<evidence type="ECO:0000312" key="10">
    <source>
        <dbReference type="ZFIN" id="ZDB-GENE-060312-35"/>
    </source>
</evidence>
<keyword id="KW-0507">mRNA processing</keyword>
<keyword id="KW-0508">mRNA splicing</keyword>
<keyword id="KW-0539">Nucleus</keyword>
<keyword id="KW-1185">Reference proteome</keyword>
<keyword id="KW-0677">Repeat</keyword>
<keyword id="KW-0694">RNA-binding</keyword>
<keyword id="KW-0747">Spliceosome</keyword>
<gene>
    <name evidence="5 10" type="primary">rnpc3</name>
</gene>
<organism evidence="9">
    <name type="scientific">Danio rerio</name>
    <name type="common">Zebrafish</name>
    <name type="synonym">Brachydanio rerio</name>
    <dbReference type="NCBI Taxonomy" id="7955"/>
    <lineage>
        <taxon>Eukaryota</taxon>
        <taxon>Metazoa</taxon>
        <taxon>Chordata</taxon>
        <taxon>Craniata</taxon>
        <taxon>Vertebrata</taxon>
        <taxon>Euteleostomi</taxon>
        <taxon>Actinopterygii</taxon>
        <taxon>Neopterygii</taxon>
        <taxon>Teleostei</taxon>
        <taxon>Ostariophysi</taxon>
        <taxon>Cypriniformes</taxon>
        <taxon>Danionidae</taxon>
        <taxon>Danioninae</taxon>
        <taxon>Danio</taxon>
    </lineage>
</organism>
<protein>
    <recommendedName>
        <fullName evidence="5">RNA-binding region-containing protein 3</fullName>
    </recommendedName>
    <alternativeName>
        <fullName evidence="1">RNA-binding protein 40</fullName>
    </alternativeName>
</protein>
<name>RNPC3_DANRE</name>
<dbReference type="EMBL" id="CT961047">
    <property type="status" value="NOT_ANNOTATED_CDS"/>
    <property type="molecule type" value="Genomic_DNA"/>
</dbReference>
<dbReference type="EMBL" id="BC114288">
    <property type="protein sequence ID" value="AAI14289.1"/>
    <property type="molecule type" value="mRNA"/>
</dbReference>
<dbReference type="RefSeq" id="NP_001035019.1">
    <property type="nucleotide sequence ID" value="NM_001039930.1"/>
</dbReference>
<dbReference type="RefSeq" id="XP_005162876.1">
    <property type="nucleotide sequence ID" value="XM_005162819.5"/>
</dbReference>
<dbReference type="RefSeq" id="XP_005162877.1">
    <property type="nucleotide sequence ID" value="XM_005162820.3"/>
</dbReference>
<dbReference type="RefSeq" id="XP_005162878.1">
    <property type="nucleotide sequence ID" value="XM_005162821.5"/>
</dbReference>
<dbReference type="RefSeq" id="XP_068073200.1">
    <property type="nucleotide sequence ID" value="XM_068217099.1"/>
</dbReference>
<dbReference type="SMR" id="F1Q8J0"/>
<dbReference type="FunCoup" id="F1Q8J0">
    <property type="interactions" value="764"/>
</dbReference>
<dbReference type="STRING" id="7955.ENSDARP00000019728"/>
<dbReference type="PaxDb" id="7955-ENSDARP00000106976"/>
<dbReference type="Ensembl" id="ENSDART00000017427">
    <property type="protein sequence ID" value="ENSDARP00000019728"/>
    <property type="gene ID" value="ENSDARG00000011247"/>
</dbReference>
<dbReference type="Ensembl" id="ENSDART00000183580">
    <property type="protein sequence ID" value="ENSDARP00000155505"/>
    <property type="gene ID" value="ENSDARG00000011247"/>
</dbReference>
<dbReference type="Ensembl" id="ENSDART00000185020">
    <property type="protein sequence ID" value="ENSDARP00000155778"/>
    <property type="gene ID" value="ENSDARG00000011247"/>
</dbReference>
<dbReference type="GeneID" id="565672"/>
<dbReference type="KEGG" id="dre:565672"/>
<dbReference type="AGR" id="ZFIN:ZDB-GENE-060312-35"/>
<dbReference type="CTD" id="55599"/>
<dbReference type="ZFIN" id="ZDB-GENE-060312-35">
    <property type="gene designation" value="rnpc3"/>
</dbReference>
<dbReference type="eggNOG" id="KOG4206">
    <property type="taxonomic scope" value="Eukaryota"/>
</dbReference>
<dbReference type="HOGENOM" id="CLU_039888_2_1_1"/>
<dbReference type="InParanoid" id="F1Q8J0"/>
<dbReference type="OMA" id="AINIRHE"/>
<dbReference type="OrthoDB" id="277802at2759"/>
<dbReference type="PhylomeDB" id="F1Q8J0"/>
<dbReference type="TreeFam" id="TF324298"/>
<dbReference type="PRO" id="PR:F1Q8J0"/>
<dbReference type="Proteomes" id="UP000000437">
    <property type="component" value="Chromosome 24"/>
</dbReference>
<dbReference type="Bgee" id="ENSDARG00000011247">
    <property type="expression patterns" value="Expressed in pharyngeal gill and 37 other cell types or tissues"/>
</dbReference>
<dbReference type="ExpressionAtlas" id="F1Q8J0">
    <property type="expression patterns" value="baseline and differential"/>
</dbReference>
<dbReference type="GO" id="GO:0005689">
    <property type="term" value="C:U12-type spliceosomal complex"/>
    <property type="evidence" value="ECO:0000318"/>
    <property type="project" value="GO_Central"/>
</dbReference>
<dbReference type="GO" id="GO:0097157">
    <property type="term" value="F:pre-mRNA intronic binding"/>
    <property type="evidence" value="ECO:0000318"/>
    <property type="project" value="GO_Central"/>
</dbReference>
<dbReference type="GO" id="GO:0030626">
    <property type="term" value="F:U12 snRNA binding"/>
    <property type="evidence" value="ECO:0000318"/>
    <property type="project" value="GO_Central"/>
</dbReference>
<dbReference type="GO" id="GO:0048565">
    <property type="term" value="P:digestive tract development"/>
    <property type="evidence" value="ECO:0000315"/>
    <property type="project" value="ZFIN"/>
</dbReference>
<dbReference type="GO" id="GO:0001889">
    <property type="term" value="P:liver development"/>
    <property type="evidence" value="ECO:0000315"/>
    <property type="project" value="ZFIN"/>
</dbReference>
<dbReference type="GO" id="GO:0000398">
    <property type="term" value="P:mRNA splicing, via spliceosome"/>
    <property type="evidence" value="ECO:0000315"/>
    <property type="project" value="ZFIN"/>
</dbReference>
<dbReference type="GO" id="GO:0031016">
    <property type="term" value="P:pancreas development"/>
    <property type="evidence" value="ECO:0000315"/>
    <property type="project" value="ZFIN"/>
</dbReference>
<dbReference type="CDD" id="cd12238">
    <property type="entry name" value="RRM1_RBM40_like"/>
    <property type="match status" value="1"/>
</dbReference>
<dbReference type="CDD" id="cd12239">
    <property type="entry name" value="RRM2_RBM40_like"/>
    <property type="match status" value="1"/>
</dbReference>
<dbReference type="FunFam" id="3.30.70.330:FF:000948">
    <property type="entry name" value="RNA-binding region (RNP1, RRM) containing 3"/>
    <property type="match status" value="1"/>
</dbReference>
<dbReference type="FunFam" id="3.30.70.330:FF:000207">
    <property type="entry name" value="RNA-binding region (RNP1, RRM)-containing 3"/>
    <property type="match status" value="1"/>
</dbReference>
<dbReference type="Gene3D" id="3.30.70.330">
    <property type="match status" value="2"/>
</dbReference>
<dbReference type="Gene3D" id="6.10.250.610">
    <property type="match status" value="1"/>
</dbReference>
<dbReference type="InterPro" id="IPR012677">
    <property type="entry name" value="Nucleotide-bd_a/b_plait_sf"/>
</dbReference>
<dbReference type="InterPro" id="IPR035979">
    <property type="entry name" value="RBD_domain_sf"/>
</dbReference>
<dbReference type="InterPro" id="IPR034147">
    <property type="entry name" value="RBM40_RRM1"/>
</dbReference>
<dbReference type="InterPro" id="IPR045164">
    <property type="entry name" value="RBM41/RNPC3"/>
</dbReference>
<dbReference type="InterPro" id="IPR000504">
    <property type="entry name" value="RRM_dom"/>
</dbReference>
<dbReference type="PANTHER" id="PTHR16105">
    <property type="entry name" value="RNA-BINDING REGION-CONTAINING PROTEIN 3"/>
    <property type="match status" value="1"/>
</dbReference>
<dbReference type="PANTHER" id="PTHR16105:SF0">
    <property type="entry name" value="RNA-BINDING REGION-CONTAINING PROTEIN 3"/>
    <property type="match status" value="1"/>
</dbReference>
<dbReference type="Pfam" id="PF00076">
    <property type="entry name" value="RRM_1"/>
    <property type="match status" value="2"/>
</dbReference>
<dbReference type="SMART" id="SM00360">
    <property type="entry name" value="RRM"/>
    <property type="match status" value="2"/>
</dbReference>
<dbReference type="SUPFAM" id="SSF54928">
    <property type="entry name" value="RNA-binding domain, RBD"/>
    <property type="match status" value="2"/>
</dbReference>
<dbReference type="PROSITE" id="PS50102">
    <property type="entry name" value="RRM"/>
    <property type="match status" value="2"/>
</dbReference>
<reference evidence="9" key="1">
    <citation type="journal article" date="2013" name="Nature">
        <title>The zebrafish reference genome sequence and its relationship to the human genome.</title>
        <authorList>
            <person name="Howe K."/>
            <person name="Clark M.D."/>
            <person name="Torroja C.F."/>
            <person name="Torrance J."/>
            <person name="Berthelot C."/>
            <person name="Muffato M."/>
            <person name="Collins J.E."/>
            <person name="Humphray S."/>
            <person name="McLaren K."/>
            <person name="Matthews L."/>
            <person name="McLaren S."/>
            <person name="Sealy I."/>
            <person name="Caccamo M."/>
            <person name="Churcher C."/>
            <person name="Scott C."/>
            <person name="Barrett J.C."/>
            <person name="Koch R."/>
            <person name="Rauch G.J."/>
            <person name="White S."/>
            <person name="Chow W."/>
            <person name="Kilian B."/>
            <person name="Quintais L.T."/>
            <person name="Guerra-Assuncao J.A."/>
            <person name="Zhou Y."/>
            <person name="Gu Y."/>
            <person name="Yen J."/>
            <person name="Vogel J.H."/>
            <person name="Eyre T."/>
            <person name="Redmond S."/>
            <person name="Banerjee R."/>
            <person name="Chi J."/>
            <person name="Fu B."/>
            <person name="Langley E."/>
            <person name="Maguire S.F."/>
            <person name="Laird G.K."/>
            <person name="Lloyd D."/>
            <person name="Kenyon E."/>
            <person name="Donaldson S."/>
            <person name="Sehra H."/>
            <person name="Almeida-King J."/>
            <person name="Loveland J."/>
            <person name="Trevanion S."/>
            <person name="Jones M."/>
            <person name="Quail M."/>
            <person name="Willey D."/>
            <person name="Hunt A."/>
            <person name="Burton J."/>
            <person name="Sims S."/>
            <person name="McLay K."/>
            <person name="Plumb B."/>
            <person name="Davis J."/>
            <person name="Clee C."/>
            <person name="Oliver K."/>
            <person name="Clark R."/>
            <person name="Riddle C."/>
            <person name="Elliot D."/>
            <person name="Threadgold G."/>
            <person name="Harden G."/>
            <person name="Ware D."/>
            <person name="Begum S."/>
            <person name="Mortimore B."/>
            <person name="Kerry G."/>
            <person name="Heath P."/>
            <person name="Phillimore B."/>
            <person name="Tracey A."/>
            <person name="Corby N."/>
            <person name="Dunn M."/>
            <person name="Johnson C."/>
            <person name="Wood J."/>
            <person name="Clark S."/>
            <person name="Pelan S."/>
            <person name="Griffiths G."/>
            <person name="Smith M."/>
            <person name="Glithero R."/>
            <person name="Howden P."/>
            <person name="Barker N."/>
            <person name="Lloyd C."/>
            <person name="Stevens C."/>
            <person name="Harley J."/>
            <person name="Holt K."/>
            <person name="Panagiotidis G."/>
            <person name="Lovell J."/>
            <person name="Beasley H."/>
            <person name="Henderson C."/>
            <person name="Gordon D."/>
            <person name="Auger K."/>
            <person name="Wright D."/>
            <person name="Collins J."/>
            <person name="Raisen C."/>
            <person name="Dyer L."/>
            <person name="Leung K."/>
            <person name="Robertson L."/>
            <person name="Ambridge K."/>
            <person name="Leongamornlert D."/>
            <person name="McGuire S."/>
            <person name="Gilderthorp R."/>
            <person name="Griffiths C."/>
            <person name="Manthravadi D."/>
            <person name="Nichol S."/>
            <person name="Barker G."/>
            <person name="Whitehead S."/>
            <person name="Kay M."/>
            <person name="Brown J."/>
            <person name="Murnane C."/>
            <person name="Gray E."/>
            <person name="Humphries M."/>
            <person name="Sycamore N."/>
            <person name="Barker D."/>
            <person name="Saunders D."/>
            <person name="Wallis J."/>
            <person name="Babbage A."/>
            <person name="Hammond S."/>
            <person name="Mashreghi-Mohammadi M."/>
            <person name="Barr L."/>
            <person name="Martin S."/>
            <person name="Wray P."/>
            <person name="Ellington A."/>
            <person name="Matthews N."/>
            <person name="Ellwood M."/>
            <person name="Woodmansey R."/>
            <person name="Clark G."/>
            <person name="Cooper J."/>
            <person name="Tromans A."/>
            <person name="Grafham D."/>
            <person name="Skuce C."/>
            <person name="Pandian R."/>
            <person name="Andrews R."/>
            <person name="Harrison E."/>
            <person name="Kimberley A."/>
            <person name="Garnett J."/>
            <person name="Fosker N."/>
            <person name="Hall R."/>
            <person name="Garner P."/>
            <person name="Kelly D."/>
            <person name="Bird C."/>
            <person name="Palmer S."/>
            <person name="Gehring I."/>
            <person name="Berger A."/>
            <person name="Dooley C.M."/>
            <person name="Ersan-Urun Z."/>
            <person name="Eser C."/>
            <person name="Geiger H."/>
            <person name="Geisler M."/>
            <person name="Karotki L."/>
            <person name="Kirn A."/>
            <person name="Konantz J."/>
            <person name="Konantz M."/>
            <person name="Oberlander M."/>
            <person name="Rudolph-Geiger S."/>
            <person name="Teucke M."/>
            <person name="Lanz C."/>
            <person name="Raddatz G."/>
            <person name="Osoegawa K."/>
            <person name="Zhu B."/>
            <person name="Rapp A."/>
            <person name="Widaa S."/>
            <person name="Langford C."/>
            <person name="Yang F."/>
            <person name="Schuster S.C."/>
            <person name="Carter N.P."/>
            <person name="Harrow J."/>
            <person name="Ning Z."/>
            <person name="Herrero J."/>
            <person name="Searle S.M."/>
            <person name="Enright A."/>
            <person name="Geisler R."/>
            <person name="Plasterk R.H."/>
            <person name="Lee C."/>
            <person name="Westerfield M."/>
            <person name="de Jong P.J."/>
            <person name="Zon L.I."/>
            <person name="Postlethwait J.H."/>
            <person name="Nusslein-Volhard C."/>
            <person name="Hubbard T.J."/>
            <person name="Roest Crollius H."/>
            <person name="Rogers J."/>
            <person name="Stemple D.L."/>
        </authorList>
    </citation>
    <scope>NUCLEOTIDE SEQUENCE [LARGE SCALE GENOMIC DNA]</scope>
    <source>
        <strain evidence="9">Tuebingen</strain>
    </source>
</reference>
<reference evidence="8" key="2">
    <citation type="submission" date="2006-03" db="EMBL/GenBank/DDBJ databases">
        <authorList>
            <consortium name="NIH - Zebrafish Gene Collection (ZGC) project"/>
        </authorList>
    </citation>
    <scope>NUCLEOTIDE SEQUENCE [LARGE SCALE MRNA]</scope>
</reference>
<reference evidence="6" key="3">
    <citation type="journal article" date="2014" name="Proc. Natl. Acad. Sci. U.S.A.">
        <title>Minor class splicing shapes the zebrafish transcriptome during development.</title>
        <authorList>
            <person name="Markmiller S."/>
            <person name="Cloonan N."/>
            <person name="Lardelli R.M."/>
            <person name="Doggett K."/>
            <person name="Keightley M.C."/>
            <person name="Boglev Y."/>
            <person name="Trotter A.J."/>
            <person name="Ng A.Y."/>
            <person name="Wilkins S.J."/>
            <person name="Verkade H."/>
            <person name="Ober E.A."/>
            <person name="Field H.A."/>
            <person name="Grimmond S.M."/>
            <person name="Lieschke G.J."/>
            <person name="Stainier D.Y."/>
            <person name="Heath J.K."/>
        </authorList>
    </citation>
    <scope>FUNCTION</scope>
    <scope>DEVELOPMENTAL STAGE</scope>
    <scope>DISRUPTION PHENOTYPE</scope>
</reference>